<gene>
    <name evidence="1" type="primary">trmFO</name>
    <name type="synonym">gid</name>
    <name type="ordered locus">blr4727</name>
</gene>
<keyword id="KW-0963">Cytoplasm</keyword>
<keyword id="KW-0274">FAD</keyword>
<keyword id="KW-0285">Flavoprotein</keyword>
<keyword id="KW-0489">Methyltransferase</keyword>
<keyword id="KW-0520">NAD</keyword>
<keyword id="KW-0521">NADP</keyword>
<keyword id="KW-1185">Reference proteome</keyword>
<keyword id="KW-0808">Transferase</keyword>
<keyword id="KW-0819">tRNA processing</keyword>
<comment type="function">
    <text evidence="1">Catalyzes the folate-dependent formation of 5-methyl-uridine at position 54 (M-5-U54) in all tRNAs.</text>
</comment>
<comment type="catalytic activity">
    <reaction evidence="1">
        <text>uridine(54) in tRNA + (6R)-5,10-methylene-5,6,7,8-tetrahydrofolate + NADH + H(+) = 5-methyluridine(54) in tRNA + (6S)-5,6,7,8-tetrahydrofolate + NAD(+)</text>
        <dbReference type="Rhea" id="RHEA:16873"/>
        <dbReference type="Rhea" id="RHEA-COMP:10167"/>
        <dbReference type="Rhea" id="RHEA-COMP:10193"/>
        <dbReference type="ChEBI" id="CHEBI:15378"/>
        <dbReference type="ChEBI" id="CHEBI:15636"/>
        <dbReference type="ChEBI" id="CHEBI:57453"/>
        <dbReference type="ChEBI" id="CHEBI:57540"/>
        <dbReference type="ChEBI" id="CHEBI:57945"/>
        <dbReference type="ChEBI" id="CHEBI:65315"/>
        <dbReference type="ChEBI" id="CHEBI:74447"/>
        <dbReference type="EC" id="2.1.1.74"/>
    </reaction>
</comment>
<comment type="catalytic activity">
    <reaction evidence="1">
        <text>uridine(54) in tRNA + (6R)-5,10-methylene-5,6,7,8-tetrahydrofolate + NADPH + H(+) = 5-methyluridine(54) in tRNA + (6S)-5,6,7,8-tetrahydrofolate + NADP(+)</text>
        <dbReference type="Rhea" id="RHEA:62372"/>
        <dbReference type="Rhea" id="RHEA-COMP:10167"/>
        <dbReference type="Rhea" id="RHEA-COMP:10193"/>
        <dbReference type="ChEBI" id="CHEBI:15378"/>
        <dbReference type="ChEBI" id="CHEBI:15636"/>
        <dbReference type="ChEBI" id="CHEBI:57453"/>
        <dbReference type="ChEBI" id="CHEBI:57783"/>
        <dbReference type="ChEBI" id="CHEBI:58349"/>
        <dbReference type="ChEBI" id="CHEBI:65315"/>
        <dbReference type="ChEBI" id="CHEBI:74447"/>
        <dbReference type="EC" id="2.1.1.74"/>
    </reaction>
</comment>
<comment type="cofactor">
    <cofactor evidence="1">
        <name>FAD</name>
        <dbReference type="ChEBI" id="CHEBI:57692"/>
    </cofactor>
</comment>
<comment type="subcellular location">
    <subcellularLocation>
        <location evidence="1">Cytoplasm</location>
    </subcellularLocation>
</comment>
<comment type="similarity">
    <text evidence="1">Belongs to the MnmG family. TrmFO subfamily.</text>
</comment>
<dbReference type="EC" id="2.1.1.74" evidence="1"/>
<dbReference type="EMBL" id="BA000040">
    <property type="protein sequence ID" value="BAC49992.1"/>
    <property type="molecule type" value="Genomic_DNA"/>
</dbReference>
<dbReference type="RefSeq" id="NP_771367.1">
    <property type="nucleotide sequence ID" value="NC_004463.1"/>
</dbReference>
<dbReference type="RefSeq" id="WP_011087495.1">
    <property type="nucleotide sequence ID" value="NC_004463.1"/>
</dbReference>
<dbReference type="SMR" id="Q89L21"/>
<dbReference type="STRING" id="224911.AAV28_20920"/>
<dbReference type="EnsemblBacteria" id="BAC49992">
    <property type="protein sequence ID" value="BAC49992"/>
    <property type="gene ID" value="BAC49992"/>
</dbReference>
<dbReference type="GeneID" id="46491734"/>
<dbReference type="KEGG" id="bja:blr4727"/>
<dbReference type="PATRIC" id="fig|224911.44.peg.4558"/>
<dbReference type="eggNOG" id="COG1206">
    <property type="taxonomic scope" value="Bacteria"/>
</dbReference>
<dbReference type="HOGENOM" id="CLU_033057_1_0_5"/>
<dbReference type="InParanoid" id="Q89L21"/>
<dbReference type="OrthoDB" id="9803114at2"/>
<dbReference type="PhylomeDB" id="Q89L21"/>
<dbReference type="Proteomes" id="UP000002526">
    <property type="component" value="Chromosome"/>
</dbReference>
<dbReference type="GO" id="GO:0005829">
    <property type="term" value="C:cytosol"/>
    <property type="evidence" value="ECO:0000318"/>
    <property type="project" value="GO_Central"/>
</dbReference>
<dbReference type="GO" id="GO:0050660">
    <property type="term" value="F:flavin adenine dinucleotide binding"/>
    <property type="evidence" value="ECO:0000318"/>
    <property type="project" value="GO_Central"/>
</dbReference>
<dbReference type="GO" id="GO:0047151">
    <property type="term" value="F:tRNA (uracil(54)-C5)-methyltransferase activity, 5,10-methylenetetrahydrofolate-dependent"/>
    <property type="evidence" value="ECO:0007669"/>
    <property type="project" value="UniProtKB-UniRule"/>
</dbReference>
<dbReference type="GO" id="GO:0030488">
    <property type="term" value="P:tRNA methylation"/>
    <property type="evidence" value="ECO:0000318"/>
    <property type="project" value="GO_Central"/>
</dbReference>
<dbReference type="GO" id="GO:0002098">
    <property type="term" value="P:tRNA wobble uridine modification"/>
    <property type="evidence" value="ECO:0000318"/>
    <property type="project" value="GO_Central"/>
</dbReference>
<dbReference type="FunFam" id="3.50.50.60:FF:000359">
    <property type="entry name" value="Methylenetetrahydrofolate--tRNA-(uracil-5-)-methyltransferase TrmFO"/>
    <property type="match status" value="1"/>
</dbReference>
<dbReference type="FunFam" id="3.50.50.60:FF:000599">
    <property type="entry name" value="Methylenetetrahydrofolate--tRNA-(uracil-5-)-methyltransferase TrmFO"/>
    <property type="match status" value="1"/>
</dbReference>
<dbReference type="Gene3D" id="3.50.50.60">
    <property type="entry name" value="FAD/NAD(P)-binding domain"/>
    <property type="match status" value="2"/>
</dbReference>
<dbReference type="HAMAP" id="MF_01037">
    <property type="entry name" value="TrmFO"/>
    <property type="match status" value="1"/>
</dbReference>
<dbReference type="InterPro" id="IPR036188">
    <property type="entry name" value="FAD/NAD-bd_sf"/>
</dbReference>
<dbReference type="InterPro" id="IPR002218">
    <property type="entry name" value="MnmG-rel"/>
</dbReference>
<dbReference type="InterPro" id="IPR020595">
    <property type="entry name" value="MnmG-rel_CS"/>
</dbReference>
<dbReference type="InterPro" id="IPR040131">
    <property type="entry name" value="MnmG_N"/>
</dbReference>
<dbReference type="InterPro" id="IPR004417">
    <property type="entry name" value="TrmFO"/>
</dbReference>
<dbReference type="NCBIfam" id="TIGR00137">
    <property type="entry name" value="gid_trmFO"/>
    <property type="match status" value="1"/>
</dbReference>
<dbReference type="NCBIfam" id="NF003739">
    <property type="entry name" value="PRK05335.1"/>
    <property type="match status" value="1"/>
</dbReference>
<dbReference type="PANTHER" id="PTHR11806">
    <property type="entry name" value="GLUCOSE INHIBITED DIVISION PROTEIN A"/>
    <property type="match status" value="1"/>
</dbReference>
<dbReference type="PANTHER" id="PTHR11806:SF2">
    <property type="entry name" value="METHYLENETETRAHYDROFOLATE--TRNA-(URACIL-5-)-METHYLTRANSFERASE TRMFO"/>
    <property type="match status" value="1"/>
</dbReference>
<dbReference type="Pfam" id="PF01134">
    <property type="entry name" value="GIDA"/>
    <property type="match status" value="1"/>
</dbReference>
<dbReference type="SUPFAM" id="SSF51905">
    <property type="entry name" value="FAD/NAD(P)-binding domain"/>
    <property type="match status" value="1"/>
</dbReference>
<dbReference type="PROSITE" id="PS01281">
    <property type="entry name" value="GIDA_2"/>
    <property type="match status" value="1"/>
</dbReference>
<reference key="1">
    <citation type="journal article" date="2002" name="DNA Res.">
        <title>Complete genomic sequence of nitrogen-fixing symbiotic bacterium Bradyrhizobium japonicum USDA110.</title>
        <authorList>
            <person name="Kaneko T."/>
            <person name="Nakamura Y."/>
            <person name="Sato S."/>
            <person name="Minamisawa K."/>
            <person name="Uchiumi T."/>
            <person name="Sasamoto S."/>
            <person name="Watanabe A."/>
            <person name="Idesawa K."/>
            <person name="Iriguchi M."/>
            <person name="Kawashima K."/>
            <person name="Kohara M."/>
            <person name="Matsumoto M."/>
            <person name="Shimpo S."/>
            <person name="Tsuruoka H."/>
            <person name="Wada T."/>
            <person name="Yamada M."/>
            <person name="Tabata S."/>
        </authorList>
    </citation>
    <scope>NUCLEOTIDE SEQUENCE [LARGE SCALE GENOMIC DNA]</scope>
    <source>
        <strain>JCM 10833 / BCRC 13528 / IAM 13628 / NBRC 14792 / USDA 110</strain>
    </source>
</reference>
<protein>
    <recommendedName>
        <fullName evidence="1">Methylenetetrahydrofolate--tRNA-(uracil-5-)-methyltransferase TrmFO</fullName>
        <ecNumber evidence="1">2.1.1.74</ecNumber>
    </recommendedName>
    <alternativeName>
        <fullName evidence="1">Folate-dependent tRNA (uracil-5-)-methyltransferase</fullName>
    </alternativeName>
    <alternativeName>
        <fullName evidence="1">Folate-dependent tRNA(M-5-U54)-methyltransferase</fullName>
    </alternativeName>
</protein>
<sequence>MTGPHSNIVHVIGAGLAGSEAAWQVAKAGVPVMLHEMRPDRMTEAHRTDGLAELVCSNSFRSDDAANNAVGLLHAEMRRLGSLIMRAADANQVPAGGALAVDRDGFSAAVTKALNDHPLIEIARGEIAGLPPADWGNVIVATGPLTSAPLADAIRELTDENALAFFDAIAPIVHRESIDMSVAWFQSRYDKVGPGGNGADYINCPMTKEQYEGFVAALIAGEKTEFKEWETNTPYFDGCLPIEVMAERGPETLRHGPMKPVGLTNPHDPTTKAYAIVQLRQDNKLGTLYNIVGFQTKLKYGEQQRIFRTIPGLEKAEFARLGGLHRNTFLNSPKLLDGQLRLRAQPRLRFAGQMTGCEGYVESASVGLIAGLYAAADARGETLASPPATTALGSLLGHITGGHIETIEPGTRSFQPMNINFGLFPPLASAPTKKPDGTRLRGNEKTVAKKQAMSALALADLDRWIADHLRIAAAA</sequence>
<feature type="chain" id="PRO_0000117237" description="Methylenetetrahydrofolate--tRNA-(uracil-5-)-methyltransferase TrmFO">
    <location>
        <begin position="1"/>
        <end position="475"/>
    </location>
</feature>
<feature type="binding site" evidence="1">
    <location>
        <begin position="13"/>
        <end position="18"/>
    </location>
    <ligand>
        <name>FAD</name>
        <dbReference type="ChEBI" id="CHEBI:57692"/>
    </ligand>
</feature>
<evidence type="ECO:0000255" key="1">
    <source>
        <dbReference type="HAMAP-Rule" id="MF_01037"/>
    </source>
</evidence>
<name>TRMFO_BRADU</name>
<accession>Q89L21</accession>
<organism>
    <name type="scientific">Bradyrhizobium diazoefficiens (strain JCM 10833 / BCRC 13528 / IAM 13628 / NBRC 14792 / USDA 110)</name>
    <dbReference type="NCBI Taxonomy" id="224911"/>
    <lineage>
        <taxon>Bacteria</taxon>
        <taxon>Pseudomonadati</taxon>
        <taxon>Pseudomonadota</taxon>
        <taxon>Alphaproteobacteria</taxon>
        <taxon>Hyphomicrobiales</taxon>
        <taxon>Nitrobacteraceae</taxon>
        <taxon>Bradyrhizobium</taxon>
    </lineage>
</organism>
<proteinExistence type="inferred from homology"/>